<dbReference type="EC" id="5.4.2.10" evidence="1"/>
<dbReference type="EMBL" id="AE003849">
    <property type="protein sequence ID" value="AAF84277.1"/>
    <property type="molecule type" value="Genomic_DNA"/>
</dbReference>
<dbReference type="PIR" id="A82679">
    <property type="entry name" value="A82679"/>
</dbReference>
<dbReference type="RefSeq" id="WP_010893969.1">
    <property type="nucleotide sequence ID" value="NC_002488.3"/>
</dbReference>
<dbReference type="SMR" id="Q9PDB1"/>
<dbReference type="STRING" id="160492.XF_1468"/>
<dbReference type="KEGG" id="xfa:XF_1468"/>
<dbReference type="eggNOG" id="COG1109">
    <property type="taxonomic scope" value="Bacteria"/>
</dbReference>
<dbReference type="HOGENOM" id="CLU_016950_7_0_6"/>
<dbReference type="Proteomes" id="UP000000812">
    <property type="component" value="Chromosome"/>
</dbReference>
<dbReference type="GO" id="GO:0005829">
    <property type="term" value="C:cytosol"/>
    <property type="evidence" value="ECO:0007669"/>
    <property type="project" value="TreeGrafter"/>
</dbReference>
<dbReference type="GO" id="GO:0000287">
    <property type="term" value="F:magnesium ion binding"/>
    <property type="evidence" value="ECO:0007669"/>
    <property type="project" value="UniProtKB-UniRule"/>
</dbReference>
<dbReference type="GO" id="GO:0008966">
    <property type="term" value="F:phosphoglucosamine mutase activity"/>
    <property type="evidence" value="ECO:0007669"/>
    <property type="project" value="UniProtKB-UniRule"/>
</dbReference>
<dbReference type="GO" id="GO:0004615">
    <property type="term" value="F:phosphomannomutase activity"/>
    <property type="evidence" value="ECO:0007669"/>
    <property type="project" value="TreeGrafter"/>
</dbReference>
<dbReference type="GO" id="GO:0005975">
    <property type="term" value="P:carbohydrate metabolic process"/>
    <property type="evidence" value="ECO:0007669"/>
    <property type="project" value="InterPro"/>
</dbReference>
<dbReference type="GO" id="GO:0009252">
    <property type="term" value="P:peptidoglycan biosynthetic process"/>
    <property type="evidence" value="ECO:0007669"/>
    <property type="project" value="TreeGrafter"/>
</dbReference>
<dbReference type="GO" id="GO:0006048">
    <property type="term" value="P:UDP-N-acetylglucosamine biosynthetic process"/>
    <property type="evidence" value="ECO:0007669"/>
    <property type="project" value="TreeGrafter"/>
</dbReference>
<dbReference type="CDD" id="cd05802">
    <property type="entry name" value="GlmM"/>
    <property type="match status" value="1"/>
</dbReference>
<dbReference type="FunFam" id="3.40.120.10:FF:000001">
    <property type="entry name" value="Phosphoglucosamine mutase"/>
    <property type="match status" value="1"/>
</dbReference>
<dbReference type="FunFam" id="3.40.120.10:FF:000003">
    <property type="entry name" value="Phosphoglucosamine mutase"/>
    <property type="match status" value="1"/>
</dbReference>
<dbReference type="Gene3D" id="3.40.120.10">
    <property type="entry name" value="Alpha-D-Glucose-1,6-Bisphosphate, subunit A, domain 3"/>
    <property type="match status" value="3"/>
</dbReference>
<dbReference type="Gene3D" id="3.30.310.50">
    <property type="entry name" value="Alpha-D-phosphohexomutase, C-terminal domain"/>
    <property type="match status" value="1"/>
</dbReference>
<dbReference type="HAMAP" id="MF_01554_B">
    <property type="entry name" value="GlmM_B"/>
    <property type="match status" value="1"/>
</dbReference>
<dbReference type="InterPro" id="IPR005844">
    <property type="entry name" value="A-D-PHexomutase_a/b/a-I"/>
</dbReference>
<dbReference type="InterPro" id="IPR016055">
    <property type="entry name" value="A-D-PHexomutase_a/b/a-I/II/III"/>
</dbReference>
<dbReference type="InterPro" id="IPR005845">
    <property type="entry name" value="A-D-PHexomutase_a/b/a-II"/>
</dbReference>
<dbReference type="InterPro" id="IPR005846">
    <property type="entry name" value="A-D-PHexomutase_a/b/a-III"/>
</dbReference>
<dbReference type="InterPro" id="IPR005843">
    <property type="entry name" value="A-D-PHexomutase_C"/>
</dbReference>
<dbReference type="InterPro" id="IPR036900">
    <property type="entry name" value="A-D-PHexomutase_C_sf"/>
</dbReference>
<dbReference type="InterPro" id="IPR016066">
    <property type="entry name" value="A-D-PHexomutase_CS"/>
</dbReference>
<dbReference type="InterPro" id="IPR005841">
    <property type="entry name" value="Alpha-D-phosphohexomutase_SF"/>
</dbReference>
<dbReference type="InterPro" id="IPR006352">
    <property type="entry name" value="GlmM_bact"/>
</dbReference>
<dbReference type="InterPro" id="IPR050060">
    <property type="entry name" value="Phosphoglucosamine_mutase"/>
</dbReference>
<dbReference type="NCBIfam" id="TIGR01455">
    <property type="entry name" value="glmM"/>
    <property type="match status" value="1"/>
</dbReference>
<dbReference type="NCBIfam" id="NF008139">
    <property type="entry name" value="PRK10887.1"/>
    <property type="match status" value="1"/>
</dbReference>
<dbReference type="PANTHER" id="PTHR42946:SF1">
    <property type="entry name" value="PHOSPHOGLUCOMUTASE (ALPHA-D-GLUCOSE-1,6-BISPHOSPHATE-DEPENDENT)"/>
    <property type="match status" value="1"/>
</dbReference>
<dbReference type="PANTHER" id="PTHR42946">
    <property type="entry name" value="PHOSPHOHEXOSE MUTASE"/>
    <property type="match status" value="1"/>
</dbReference>
<dbReference type="Pfam" id="PF02878">
    <property type="entry name" value="PGM_PMM_I"/>
    <property type="match status" value="1"/>
</dbReference>
<dbReference type="Pfam" id="PF02879">
    <property type="entry name" value="PGM_PMM_II"/>
    <property type="match status" value="1"/>
</dbReference>
<dbReference type="Pfam" id="PF02880">
    <property type="entry name" value="PGM_PMM_III"/>
    <property type="match status" value="1"/>
</dbReference>
<dbReference type="Pfam" id="PF00408">
    <property type="entry name" value="PGM_PMM_IV"/>
    <property type="match status" value="1"/>
</dbReference>
<dbReference type="PRINTS" id="PR00509">
    <property type="entry name" value="PGMPMM"/>
</dbReference>
<dbReference type="SUPFAM" id="SSF55957">
    <property type="entry name" value="Phosphoglucomutase, C-terminal domain"/>
    <property type="match status" value="1"/>
</dbReference>
<dbReference type="SUPFAM" id="SSF53738">
    <property type="entry name" value="Phosphoglucomutase, first 3 domains"/>
    <property type="match status" value="3"/>
</dbReference>
<dbReference type="PROSITE" id="PS00710">
    <property type="entry name" value="PGM_PMM"/>
    <property type="match status" value="1"/>
</dbReference>
<reference key="1">
    <citation type="journal article" date="2000" name="Nature">
        <title>The genome sequence of the plant pathogen Xylella fastidiosa.</title>
        <authorList>
            <person name="Simpson A.J.G."/>
            <person name="Reinach F.C."/>
            <person name="Arruda P."/>
            <person name="Abreu F.A."/>
            <person name="Acencio M."/>
            <person name="Alvarenga R."/>
            <person name="Alves L.M.C."/>
            <person name="Araya J.E."/>
            <person name="Baia G.S."/>
            <person name="Baptista C.S."/>
            <person name="Barros M.H."/>
            <person name="Bonaccorsi E.D."/>
            <person name="Bordin S."/>
            <person name="Bove J.M."/>
            <person name="Briones M.R.S."/>
            <person name="Bueno M.R.P."/>
            <person name="Camargo A.A."/>
            <person name="Camargo L.E.A."/>
            <person name="Carraro D.M."/>
            <person name="Carrer H."/>
            <person name="Colauto N.B."/>
            <person name="Colombo C."/>
            <person name="Costa F.F."/>
            <person name="Costa M.C.R."/>
            <person name="Costa-Neto C.M."/>
            <person name="Coutinho L.L."/>
            <person name="Cristofani M."/>
            <person name="Dias-Neto E."/>
            <person name="Docena C."/>
            <person name="El-Dorry H."/>
            <person name="Facincani A.P."/>
            <person name="Ferreira A.J.S."/>
            <person name="Ferreira V.C.A."/>
            <person name="Ferro J.A."/>
            <person name="Fraga J.S."/>
            <person name="Franca S.C."/>
            <person name="Franco M.C."/>
            <person name="Frohme M."/>
            <person name="Furlan L.R."/>
            <person name="Garnier M."/>
            <person name="Goldman G.H."/>
            <person name="Goldman M.H.S."/>
            <person name="Gomes S.L."/>
            <person name="Gruber A."/>
            <person name="Ho P.L."/>
            <person name="Hoheisel J.D."/>
            <person name="Junqueira M.L."/>
            <person name="Kemper E.L."/>
            <person name="Kitajima J.P."/>
            <person name="Krieger J.E."/>
            <person name="Kuramae E.E."/>
            <person name="Laigret F."/>
            <person name="Lambais M.R."/>
            <person name="Leite L.C.C."/>
            <person name="Lemos E.G.M."/>
            <person name="Lemos M.V.F."/>
            <person name="Lopes S.A."/>
            <person name="Lopes C.R."/>
            <person name="Machado J.A."/>
            <person name="Machado M.A."/>
            <person name="Madeira A.M.B.N."/>
            <person name="Madeira H.M.F."/>
            <person name="Marino C.L."/>
            <person name="Marques M.V."/>
            <person name="Martins E.A.L."/>
            <person name="Martins E.M.F."/>
            <person name="Matsukuma A.Y."/>
            <person name="Menck C.F.M."/>
            <person name="Miracca E.C."/>
            <person name="Miyaki C.Y."/>
            <person name="Monteiro-Vitorello C.B."/>
            <person name="Moon D.H."/>
            <person name="Nagai M.A."/>
            <person name="Nascimento A.L.T.O."/>
            <person name="Netto L.E.S."/>
            <person name="Nhani A. Jr."/>
            <person name="Nobrega F.G."/>
            <person name="Nunes L.R."/>
            <person name="Oliveira M.A."/>
            <person name="de Oliveira M.C."/>
            <person name="de Oliveira R.C."/>
            <person name="Palmieri D.A."/>
            <person name="Paris A."/>
            <person name="Peixoto B.R."/>
            <person name="Pereira G.A.G."/>
            <person name="Pereira H.A. Jr."/>
            <person name="Pesquero J.B."/>
            <person name="Quaggio R.B."/>
            <person name="Roberto P.G."/>
            <person name="Rodrigues V."/>
            <person name="de Rosa A.J.M."/>
            <person name="de Rosa V.E. Jr."/>
            <person name="de Sa R.G."/>
            <person name="Santelli R.V."/>
            <person name="Sawasaki H.E."/>
            <person name="da Silva A.C.R."/>
            <person name="da Silva A.M."/>
            <person name="da Silva F.R."/>
            <person name="Silva W.A. Jr."/>
            <person name="da Silveira J.F."/>
            <person name="Silvestri M.L.Z."/>
            <person name="Siqueira W.J."/>
            <person name="de Souza A.A."/>
            <person name="de Souza A.P."/>
            <person name="Terenzi M.F."/>
            <person name="Truffi D."/>
            <person name="Tsai S.M."/>
            <person name="Tsuhako M.H."/>
            <person name="Vallada H."/>
            <person name="Van Sluys M.A."/>
            <person name="Verjovski-Almeida S."/>
            <person name="Vettore A.L."/>
            <person name="Zago M.A."/>
            <person name="Zatz M."/>
            <person name="Meidanis J."/>
            <person name="Setubal J.C."/>
        </authorList>
    </citation>
    <scope>NUCLEOTIDE SEQUENCE [LARGE SCALE GENOMIC DNA]</scope>
    <source>
        <strain>9a5c</strain>
    </source>
</reference>
<accession>Q9PDB1</accession>
<gene>
    <name evidence="1" type="primary">glmM</name>
    <name type="ordered locus">XF_1468</name>
</gene>
<keyword id="KW-0413">Isomerase</keyword>
<keyword id="KW-0460">Magnesium</keyword>
<keyword id="KW-0479">Metal-binding</keyword>
<keyword id="KW-0597">Phosphoprotein</keyword>
<sequence length="448" mass="47441">MRVSRYFGTDGIRGRVGQGLISADFVLRLGNALGRVLAQGRDTRPMVLIGKDTRISGYMFESALEAGLVAAGADVQLIGPMPTPAIAFLTNTLRADAGVVISASHNPHDDNGIKFFSAMGEKLDDATEAAIEAAIEAPFLTVDSEYLGKVKRTRDAIGRYIEFSKASVPRGFTLRGLKLVLDCAHGATYHIAPMLFRELGAELVAIGVDPDGLNINAGVGSTHLETLAATVRESGADLGIAFDGDGDRVLMTDAQGRTVDGDDLLYVLARAWRASGRLKGTVVGTLMSNYGLEQALGTLGIPFIRAKVGDRYVHQALVESGGVLGGEASGHLLCLDRATTGDGIVSALQVLEVLRHEGLTLSQALLGLHKVPQKTVNVCWSGPARAAVEMPEVRQALVEAQAAVQGRGRVFLRPSGTEPVVRITVEADDVVLMQQTLDRLADVVRDAA</sequence>
<evidence type="ECO:0000255" key="1">
    <source>
        <dbReference type="HAMAP-Rule" id="MF_01554"/>
    </source>
</evidence>
<protein>
    <recommendedName>
        <fullName evidence="1">Phosphoglucosamine mutase</fullName>
        <ecNumber evidence="1">5.4.2.10</ecNumber>
    </recommendedName>
</protein>
<comment type="function">
    <text evidence="1">Catalyzes the conversion of glucosamine-6-phosphate to glucosamine-1-phosphate.</text>
</comment>
<comment type="catalytic activity">
    <reaction evidence="1">
        <text>alpha-D-glucosamine 1-phosphate = D-glucosamine 6-phosphate</text>
        <dbReference type="Rhea" id="RHEA:23424"/>
        <dbReference type="ChEBI" id="CHEBI:58516"/>
        <dbReference type="ChEBI" id="CHEBI:58725"/>
        <dbReference type="EC" id="5.4.2.10"/>
    </reaction>
</comment>
<comment type="cofactor">
    <cofactor evidence="1">
        <name>Mg(2+)</name>
        <dbReference type="ChEBI" id="CHEBI:18420"/>
    </cofactor>
    <text evidence="1">Binds 1 Mg(2+) ion per subunit.</text>
</comment>
<comment type="PTM">
    <text evidence="1">Activated by phosphorylation.</text>
</comment>
<comment type="similarity">
    <text evidence="1">Belongs to the phosphohexose mutase family.</text>
</comment>
<organism>
    <name type="scientific">Xylella fastidiosa (strain 9a5c)</name>
    <dbReference type="NCBI Taxonomy" id="160492"/>
    <lineage>
        <taxon>Bacteria</taxon>
        <taxon>Pseudomonadati</taxon>
        <taxon>Pseudomonadota</taxon>
        <taxon>Gammaproteobacteria</taxon>
        <taxon>Lysobacterales</taxon>
        <taxon>Lysobacteraceae</taxon>
        <taxon>Xylella</taxon>
    </lineage>
</organism>
<name>GLMM_XYLFA</name>
<feature type="chain" id="PRO_0000148008" description="Phosphoglucosamine mutase">
    <location>
        <begin position="1"/>
        <end position="448"/>
    </location>
</feature>
<feature type="active site" description="Phosphoserine intermediate" evidence="1">
    <location>
        <position position="104"/>
    </location>
</feature>
<feature type="binding site" description="via phosphate group" evidence="1">
    <location>
        <position position="104"/>
    </location>
    <ligand>
        <name>Mg(2+)</name>
        <dbReference type="ChEBI" id="CHEBI:18420"/>
    </ligand>
</feature>
<feature type="binding site" evidence="1">
    <location>
        <position position="243"/>
    </location>
    <ligand>
        <name>Mg(2+)</name>
        <dbReference type="ChEBI" id="CHEBI:18420"/>
    </ligand>
</feature>
<feature type="binding site" evidence="1">
    <location>
        <position position="245"/>
    </location>
    <ligand>
        <name>Mg(2+)</name>
        <dbReference type="ChEBI" id="CHEBI:18420"/>
    </ligand>
</feature>
<feature type="binding site" evidence="1">
    <location>
        <position position="247"/>
    </location>
    <ligand>
        <name>Mg(2+)</name>
        <dbReference type="ChEBI" id="CHEBI:18420"/>
    </ligand>
</feature>
<feature type="modified residue" description="Phosphoserine" evidence="1">
    <location>
        <position position="104"/>
    </location>
</feature>
<proteinExistence type="inferred from homology"/>